<sequence>MAGNLLRGPPLLLRASDKYPRTPKCARCRNHGVVSALKGHKRYCRWKDCMCAKCTLIAERQRVMAAQVALRRQQAQEENEVRELQLLYGTAEGLALAAANGIIPPRPNYEVFGSVSSESNSDSSVQKFETFSKGQLSGPTTPQQAAGKSASAESDSAPGMSSPDGRHGGSGSENGDSESFINSPVSKPLKDGGETPGSVSSIGSDSGSETDKDEQEPSPSSAASRHMNAIDILTRVFPSHKRSILELVLQGCGKDVVQAIEQILNNSGAQGSNKAGPDEGWTAERMLQGAQQPPPPPAASTAPTRPLLPGAMTLSNRSAFSPLQPNTPHFGADPSTYPLGTHLGLNPLRLAYSAHGRGLAFMTPYSTTGLMPTLGFRPPMDYAFSDLIRDRTMLHKEQGYSGGLYGPLVNNTTEKQ</sequence>
<dbReference type="EMBL" id="AB201465">
    <property type="protein sequence ID" value="BAE16956.1"/>
    <property type="molecule type" value="mRNA"/>
</dbReference>
<dbReference type="RefSeq" id="NP_001033039.1">
    <property type="nucleotide sequence ID" value="NM_001037950.1"/>
</dbReference>
<dbReference type="SMR" id="Q4AE28"/>
<dbReference type="FunCoup" id="Q4AE28">
    <property type="interactions" value="479"/>
</dbReference>
<dbReference type="STRING" id="31033.ENSTRUP00000004209"/>
<dbReference type="GeneID" id="654282"/>
<dbReference type="KEGG" id="tru:654282"/>
<dbReference type="CTD" id="63950"/>
<dbReference type="eggNOG" id="KOG3815">
    <property type="taxonomic scope" value="Eukaryota"/>
</dbReference>
<dbReference type="InParanoid" id="Q4AE28"/>
<dbReference type="OrthoDB" id="9942608at2759"/>
<dbReference type="Proteomes" id="UP000005226">
    <property type="component" value="Unplaced"/>
</dbReference>
<dbReference type="GO" id="GO:0005634">
    <property type="term" value="C:nucleus"/>
    <property type="evidence" value="ECO:0007669"/>
    <property type="project" value="UniProtKB-SubCell"/>
</dbReference>
<dbReference type="GO" id="GO:0000981">
    <property type="term" value="F:DNA-binding transcription factor activity, RNA polymerase II-specific"/>
    <property type="evidence" value="ECO:0007669"/>
    <property type="project" value="TreeGrafter"/>
</dbReference>
<dbReference type="GO" id="GO:0046872">
    <property type="term" value="F:metal ion binding"/>
    <property type="evidence" value="ECO:0007669"/>
    <property type="project" value="UniProtKB-KW"/>
</dbReference>
<dbReference type="GO" id="GO:0000978">
    <property type="term" value="F:RNA polymerase II cis-regulatory region sequence-specific DNA binding"/>
    <property type="evidence" value="ECO:0007669"/>
    <property type="project" value="TreeGrafter"/>
</dbReference>
<dbReference type="GO" id="GO:0007281">
    <property type="term" value="P:germ cell development"/>
    <property type="evidence" value="ECO:0007669"/>
    <property type="project" value="TreeGrafter"/>
</dbReference>
<dbReference type="GO" id="GO:0007548">
    <property type="term" value="P:sex differentiation"/>
    <property type="evidence" value="ECO:0007669"/>
    <property type="project" value="TreeGrafter"/>
</dbReference>
<dbReference type="FunFam" id="4.10.1040.10:FF:000001">
    <property type="entry name" value="doublesex- and mab-3-related transcription factor 1"/>
    <property type="match status" value="1"/>
</dbReference>
<dbReference type="Gene3D" id="4.10.1040.10">
    <property type="entry name" value="DM DNA-binding domain"/>
    <property type="match status" value="1"/>
</dbReference>
<dbReference type="Gene3D" id="1.10.8.10">
    <property type="entry name" value="DNA helicase RuvA subunit, C-terminal domain"/>
    <property type="match status" value="1"/>
</dbReference>
<dbReference type="InterPro" id="IPR001275">
    <property type="entry name" value="DM_DNA-bd"/>
</dbReference>
<dbReference type="InterPro" id="IPR036407">
    <property type="entry name" value="DM_DNA-bd_sf"/>
</dbReference>
<dbReference type="InterPro" id="IPR005173">
    <property type="entry name" value="DMA"/>
</dbReference>
<dbReference type="InterPro" id="IPR026607">
    <property type="entry name" value="DMRT"/>
</dbReference>
<dbReference type="InterPro" id="IPR046472">
    <property type="entry name" value="DMRT5_1_DMB_dom"/>
</dbReference>
<dbReference type="InterPro" id="IPR009060">
    <property type="entry name" value="UBA-like_sf"/>
</dbReference>
<dbReference type="PANTHER" id="PTHR12322">
    <property type="entry name" value="DOUBLESEX AND MAB-3 RELATED TRANSCRIPTION FACTOR DMRT"/>
    <property type="match status" value="1"/>
</dbReference>
<dbReference type="PANTHER" id="PTHR12322:SF76">
    <property type="entry name" value="DOUBLESEX- AND MAB-3-RELATED TRANSCRIPTION FACTOR A2"/>
    <property type="match status" value="1"/>
</dbReference>
<dbReference type="Pfam" id="PF00751">
    <property type="entry name" value="DM"/>
    <property type="match status" value="1"/>
</dbReference>
<dbReference type="Pfam" id="PF03474">
    <property type="entry name" value="DMA"/>
    <property type="match status" value="1"/>
</dbReference>
<dbReference type="Pfam" id="PF20624">
    <property type="entry name" value="DMRT5_DMB"/>
    <property type="match status" value="1"/>
</dbReference>
<dbReference type="SMART" id="SM00301">
    <property type="entry name" value="DM"/>
    <property type="match status" value="1"/>
</dbReference>
<dbReference type="SUPFAM" id="SSF82927">
    <property type="entry name" value="Cysteine-rich DNA binding domain, (DM domain)"/>
    <property type="match status" value="1"/>
</dbReference>
<dbReference type="SUPFAM" id="SSF46934">
    <property type="entry name" value="UBA-like"/>
    <property type="match status" value="1"/>
</dbReference>
<dbReference type="PROSITE" id="PS40000">
    <property type="entry name" value="DM_1"/>
    <property type="match status" value="1"/>
</dbReference>
<dbReference type="PROSITE" id="PS50809">
    <property type="entry name" value="DM_2"/>
    <property type="match status" value="1"/>
</dbReference>
<name>DMTA2_TAKRU</name>
<proteinExistence type="evidence at transcript level"/>
<accession>Q4AE28</accession>
<protein>
    <recommendedName>
        <fullName>Doublesex- and mab-3-related transcription factor A2</fullName>
    </recommendedName>
    <alternativeName>
        <fullName>Doublesex- and mab-3-related transcription factor 5</fullName>
    </alternativeName>
</protein>
<feature type="chain" id="PRO_0000333775" description="Doublesex- and mab-3-related transcription factor A2">
    <location>
        <begin position="1"/>
        <end position="416"/>
    </location>
</feature>
<feature type="domain" description="DMA" evidence="1">
    <location>
        <begin position="227"/>
        <end position="262"/>
    </location>
</feature>
<feature type="DNA-binding region" description="DM" evidence="2">
    <location>
        <begin position="25"/>
        <end position="72"/>
    </location>
</feature>
<feature type="region of interest" description="Disordered" evidence="3">
    <location>
        <begin position="131"/>
        <end position="226"/>
    </location>
</feature>
<feature type="compositionally biased region" description="Polar residues" evidence="3">
    <location>
        <begin position="131"/>
        <end position="154"/>
    </location>
</feature>
<feature type="compositionally biased region" description="Low complexity" evidence="3">
    <location>
        <begin position="197"/>
        <end position="207"/>
    </location>
</feature>
<comment type="function">
    <text>May be involved in sexual development.</text>
</comment>
<comment type="subcellular location">
    <subcellularLocation>
        <location evidence="2">Nucleus</location>
    </subcellularLocation>
</comment>
<comment type="similarity">
    <text evidence="4">Belongs to the DMRT family.</text>
</comment>
<reference key="1">
    <citation type="submission" date="2005-02" db="EMBL/GenBank/DDBJ databases">
        <title>Expression of the DMRT gene and its roles in early gonadal development of the Japanese pufferfish Takifugu rubripes.</title>
        <authorList>
            <person name="Yamaguchi A."/>
        </authorList>
    </citation>
    <scope>NUCLEOTIDE SEQUENCE [MRNA]</scope>
    <source>
        <tissue>Larva</tissue>
    </source>
</reference>
<organism>
    <name type="scientific">Takifugu rubripes</name>
    <name type="common">Japanese pufferfish</name>
    <name type="synonym">Fugu rubripes</name>
    <dbReference type="NCBI Taxonomy" id="31033"/>
    <lineage>
        <taxon>Eukaryota</taxon>
        <taxon>Metazoa</taxon>
        <taxon>Chordata</taxon>
        <taxon>Craniata</taxon>
        <taxon>Vertebrata</taxon>
        <taxon>Euteleostomi</taxon>
        <taxon>Actinopterygii</taxon>
        <taxon>Neopterygii</taxon>
        <taxon>Teleostei</taxon>
        <taxon>Neoteleostei</taxon>
        <taxon>Acanthomorphata</taxon>
        <taxon>Eupercaria</taxon>
        <taxon>Tetraodontiformes</taxon>
        <taxon>Tetradontoidea</taxon>
        <taxon>Tetraodontidae</taxon>
        <taxon>Takifugu</taxon>
    </lineage>
</organism>
<keyword id="KW-0238">DNA-binding</keyword>
<keyword id="KW-0479">Metal-binding</keyword>
<keyword id="KW-0539">Nucleus</keyword>
<keyword id="KW-1185">Reference proteome</keyword>
<keyword id="KW-0862">Zinc</keyword>
<evidence type="ECO:0000255" key="1"/>
<evidence type="ECO:0000255" key="2">
    <source>
        <dbReference type="PROSITE-ProRule" id="PRU00070"/>
    </source>
</evidence>
<evidence type="ECO:0000256" key="3">
    <source>
        <dbReference type="SAM" id="MobiDB-lite"/>
    </source>
</evidence>
<evidence type="ECO:0000305" key="4"/>
<gene>
    <name type="primary">dmrta2</name>
    <name type="synonym">dmrt5</name>
</gene>